<comment type="function">
    <text evidence="1">Catalyzes the NADPH-dependent rearrangement and reduction of 1-deoxy-D-xylulose-5-phosphate (DXP) to 2-C-methyl-D-erythritol 4-phosphate (MEP).</text>
</comment>
<comment type="catalytic activity">
    <reaction evidence="1">
        <text>2-C-methyl-D-erythritol 4-phosphate + NADP(+) = 1-deoxy-D-xylulose 5-phosphate + NADPH + H(+)</text>
        <dbReference type="Rhea" id="RHEA:13717"/>
        <dbReference type="ChEBI" id="CHEBI:15378"/>
        <dbReference type="ChEBI" id="CHEBI:57783"/>
        <dbReference type="ChEBI" id="CHEBI:57792"/>
        <dbReference type="ChEBI" id="CHEBI:58262"/>
        <dbReference type="ChEBI" id="CHEBI:58349"/>
        <dbReference type="EC" id="1.1.1.267"/>
    </reaction>
    <physiologicalReaction direction="right-to-left" evidence="1">
        <dbReference type="Rhea" id="RHEA:13719"/>
    </physiologicalReaction>
</comment>
<comment type="cofactor">
    <cofactor evidence="1">
        <name>Mg(2+)</name>
        <dbReference type="ChEBI" id="CHEBI:18420"/>
    </cofactor>
    <cofactor evidence="1">
        <name>Mn(2+)</name>
        <dbReference type="ChEBI" id="CHEBI:29035"/>
    </cofactor>
</comment>
<comment type="pathway">
    <text evidence="1">Isoprenoid biosynthesis; isopentenyl diphosphate biosynthesis via DXP pathway; isopentenyl diphosphate from 1-deoxy-D-xylulose 5-phosphate: step 1/6.</text>
</comment>
<comment type="similarity">
    <text evidence="1">Belongs to the DXR family.</text>
</comment>
<evidence type="ECO:0000255" key="1">
    <source>
        <dbReference type="HAMAP-Rule" id="MF_00183"/>
    </source>
</evidence>
<feature type="chain" id="PRO_1000020210" description="1-deoxy-D-xylulose 5-phosphate reductoisomerase">
    <location>
        <begin position="1"/>
        <end position="396"/>
    </location>
</feature>
<feature type="binding site" evidence="1">
    <location>
        <position position="10"/>
    </location>
    <ligand>
        <name>NADPH</name>
        <dbReference type="ChEBI" id="CHEBI:57783"/>
    </ligand>
</feature>
<feature type="binding site" evidence="1">
    <location>
        <position position="11"/>
    </location>
    <ligand>
        <name>NADPH</name>
        <dbReference type="ChEBI" id="CHEBI:57783"/>
    </ligand>
</feature>
<feature type="binding site" evidence="1">
    <location>
        <position position="12"/>
    </location>
    <ligand>
        <name>NADPH</name>
        <dbReference type="ChEBI" id="CHEBI:57783"/>
    </ligand>
</feature>
<feature type="binding site" evidence="1">
    <location>
        <position position="13"/>
    </location>
    <ligand>
        <name>NADPH</name>
        <dbReference type="ChEBI" id="CHEBI:57783"/>
    </ligand>
</feature>
<feature type="binding site" evidence="1">
    <location>
        <position position="36"/>
    </location>
    <ligand>
        <name>NADPH</name>
        <dbReference type="ChEBI" id="CHEBI:57783"/>
    </ligand>
</feature>
<feature type="binding site" evidence="1">
    <location>
        <position position="37"/>
    </location>
    <ligand>
        <name>NADPH</name>
        <dbReference type="ChEBI" id="CHEBI:57783"/>
    </ligand>
</feature>
<feature type="binding site" evidence="1">
    <location>
        <position position="38"/>
    </location>
    <ligand>
        <name>NADPH</name>
        <dbReference type="ChEBI" id="CHEBI:57783"/>
    </ligand>
</feature>
<feature type="binding site" evidence="1">
    <location>
        <position position="124"/>
    </location>
    <ligand>
        <name>NADPH</name>
        <dbReference type="ChEBI" id="CHEBI:57783"/>
    </ligand>
</feature>
<feature type="binding site" evidence="1">
    <location>
        <position position="125"/>
    </location>
    <ligand>
        <name>1-deoxy-D-xylulose 5-phosphate</name>
        <dbReference type="ChEBI" id="CHEBI:57792"/>
    </ligand>
</feature>
<feature type="binding site" evidence="1">
    <location>
        <position position="126"/>
    </location>
    <ligand>
        <name>NADPH</name>
        <dbReference type="ChEBI" id="CHEBI:57783"/>
    </ligand>
</feature>
<feature type="binding site" evidence="1">
    <location>
        <position position="150"/>
    </location>
    <ligand>
        <name>Mn(2+)</name>
        <dbReference type="ChEBI" id="CHEBI:29035"/>
    </ligand>
</feature>
<feature type="binding site" evidence="1">
    <location>
        <position position="151"/>
    </location>
    <ligand>
        <name>1-deoxy-D-xylulose 5-phosphate</name>
        <dbReference type="ChEBI" id="CHEBI:57792"/>
    </ligand>
</feature>
<feature type="binding site" evidence="1">
    <location>
        <position position="152"/>
    </location>
    <ligand>
        <name>1-deoxy-D-xylulose 5-phosphate</name>
        <dbReference type="ChEBI" id="CHEBI:57792"/>
    </ligand>
</feature>
<feature type="binding site" evidence="1">
    <location>
        <position position="152"/>
    </location>
    <ligand>
        <name>Mn(2+)</name>
        <dbReference type="ChEBI" id="CHEBI:29035"/>
    </ligand>
</feature>
<feature type="binding site" evidence="1">
    <location>
        <position position="186"/>
    </location>
    <ligand>
        <name>1-deoxy-D-xylulose 5-phosphate</name>
        <dbReference type="ChEBI" id="CHEBI:57792"/>
    </ligand>
</feature>
<feature type="binding site" evidence="1">
    <location>
        <position position="209"/>
    </location>
    <ligand>
        <name>1-deoxy-D-xylulose 5-phosphate</name>
        <dbReference type="ChEBI" id="CHEBI:57792"/>
    </ligand>
</feature>
<feature type="binding site" evidence="1">
    <location>
        <position position="215"/>
    </location>
    <ligand>
        <name>NADPH</name>
        <dbReference type="ChEBI" id="CHEBI:57783"/>
    </ligand>
</feature>
<feature type="binding site" evidence="1">
    <location>
        <position position="222"/>
    </location>
    <ligand>
        <name>1-deoxy-D-xylulose 5-phosphate</name>
        <dbReference type="ChEBI" id="CHEBI:57792"/>
    </ligand>
</feature>
<feature type="binding site" evidence="1">
    <location>
        <position position="227"/>
    </location>
    <ligand>
        <name>1-deoxy-D-xylulose 5-phosphate</name>
        <dbReference type="ChEBI" id="CHEBI:57792"/>
    </ligand>
</feature>
<feature type="binding site" evidence="1">
    <location>
        <position position="228"/>
    </location>
    <ligand>
        <name>1-deoxy-D-xylulose 5-phosphate</name>
        <dbReference type="ChEBI" id="CHEBI:57792"/>
    </ligand>
</feature>
<feature type="binding site" evidence="1">
    <location>
        <position position="231"/>
    </location>
    <ligand>
        <name>1-deoxy-D-xylulose 5-phosphate</name>
        <dbReference type="ChEBI" id="CHEBI:57792"/>
    </ligand>
</feature>
<feature type="binding site" evidence="1">
    <location>
        <position position="231"/>
    </location>
    <ligand>
        <name>Mn(2+)</name>
        <dbReference type="ChEBI" id="CHEBI:29035"/>
    </ligand>
</feature>
<organism>
    <name type="scientific">Actinobacillus pleuropneumoniae serotype 5b (strain L20)</name>
    <dbReference type="NCBI Taxonomy" id="416269"/>
    <lineage>
        <taxon>Bacteria</taxon>
        <taxon>Pseudomonadati</taxon>
        <taxon>Pseudomonadota</taxon>
        <taxon>Gammaproteobacteria</taxon>
        <taxon>Pasteurellales</taxon>
        <taxon>Pasteurellaceae</taxon>
        <taxon>Actinobacillus</taxon>
    </lineage>
</organism>
<protein>
    <recommendedName>
        <fullName evidence="1">1-deoxy-D-xylulose 5-phosphate reductoisomerase</fullName>
        <shortName evidence="1">DXP reductoisomerase</shortName>
        <ecNumber evidence="1">1.1.1.267</ecNumber>
    </recommendedName>
    <alternativeName>
        <fullName evidence="1">1-deoxyxylulose-5-phosphate reductoisomerase</fullName>
    </alternativeName>
    <alternativeName>
        <fullName evidence="1">2-C-methyl-D-erythritol 4-phosphate synthase</fullName>
    </alternativeName>
</protein>
<keyword id="KW-0414">Isoprene biosynthesis</keyword>
<keyword id="KW-0464">Manganese</keyword>
<keyword id="KW-0479">Metal-binding</keyword>
<keyword id="KW-0521">NADP</keyword>
<keyword id="KW-0560">Oxidoreductase</keyword>
<keyword id="KW-1185">Reference proteome</keyword>
<gene>
    <name evidence="1" type="primary">dxr</name>
    <name type="ordered locus">APL_0406</name>
</gene>
<sequence>MKKLVILGSTGSIGKSTLSVVEQNKTEYEVFGLVGGKNVELMAAQCLLFQPKFAALDDENAAKALEEQLRQLNVKTEVLSGQKAICELSAHPEVDMVMAAIVGAAGLLPTLSAVKAGKKVLLANKESLVTCGQIFIDEARKSGAQLLPVDSEHNAIFQSLPPDAQQKVGFCPLAELGVSKIILTGSGGPFRVKPLDEFAAITPAQAVAHPNWSMGKKISVDSATMMNKGLEYIEARWLFNASAEEMEIIIHPQSIIHSMVRYIDGSVIAQMGNPDMCTPIAHTMAYPKRINAGVAPLDFFKLKELTFIEPDFARYPNLKLAIDAFAEGQYATTAMNAANEVAVEAFLNERIRFIDIVNVNRTVVENIAPVQVKEIADVLHIDKLARELAEQAVINL</sequence>
<proteinExistence type="inferred from homology"/>
<accession>A3MZC4</accession>
<reference key="1">
    <citation type="journal article" date="2008" name="J. Bacteriol.">
        <title>The complete genome sequence of Actinobacillus pleuropneumoniae L20 (serotype 5b).</title>
        <authorList>
            <person name="Foote S.J."/>
            <person name="Bosse J.T."/>
            <person name="Bouevitch A.B."/>
            <person name="Langford P.R."/>
            <person name="Young N.M."/>
            <person name="Nash J.H.E."/>
        </authorList>
    </citation>
    <scope>NUCLEOTIDE SEQUENCE [LARGE SCALE GENOMIC DNA]</scope>
    <source>
        <strain>L20</strain>
    </source>
</reference>
<dbReference type="EC" id="1.1.1.267" evidence="1"/>
<dbReference type="EMBL" id="CP000569">
    <property type="protein sequence ID" value="ABN73510.1"/>
    <property type="molecule type" value="Genomic_DNA"/>
</dbReference>
<dbReference type="RefSeq" id="WP_011848368.1">
    <property type="nucleotide sequence ID" value="NC_009053.1"/>
</dbReference>
<dbReference type="SMR" id="A3MZC4"/>
<dbReference type="STRING" id="416269.APL_0406"/>
<dbReference type="EnsemblBacteria" id="ABN73510">
    <property type="protein sequence ID" value="ABN73510"/>
    <property type="gene ID" value="APL_0406"/>
</dbReference>
<dbReference type="KEGG" id="apl:APL_0406"/>
<dbReference type="PATRIC" id="fig|416269.6.peg.419"/>
<dbReference type="eggNOG" id="COG0743">
    <property type="taxonomic scope" value="Bacteria"/>
</dbReference>
<dbReference type="HOGENOM" id="CLU_035714_0_1_6"/>
<dbReference type="UniPathway" id="UPA00056">
    <property type="reaction ID" value="UER00092"/>
</dbReference>
<dbReference type="Proteomes" id="UP000001432">
    <property type="component" value="Chromosome"/>
</dbReference>
<dbReference type="GO" id="GO:0030604">
    <property type="term" value="F:1-deoxy-D-xylulose-5-phosphate reductoisomerase activity"/>
    <property type="evidence" value="ECO:0007669"/>
    <property type="project" value="UniProtKB-UniRule"/>
</dbReference>
<dbReference type="GO" id="GO:0030145">
    <property type="term" value="F:manganese ion binding"/>
    <property type="evidence" value="ECO:0007669"/>
    <property type="project" value="TreeGrafter"/>
</dbReference>
<dbReference type="GO" id="GO:0070402">
    <property type="term" value="F:NADPH binding"/>
    <property type="evidence" value="ECO:0007669"/>
    <property type="project" value="InterPro"/>
</dbReference>
<dbReference type="GO" id="GO:0051484">
    <property type="term" value="P:isopentenyl diphosphate biosynthetic process, methylerythritol 4-phosphate pathway involved in terpenoid biosynthetic process"/>
    <property type="evidence" value="ECO:0007669"/>
    <property type="project" value="TreeGrafter"/>
</dbReference>
<dbReference type="FunFam" id="1.10.1740.10:FF:000004">
    <property type="entry name" value="1-deoxy-D-xylulose 5-phosphate reductoisomerase"/>
    <property type="match status" value="1"/>
</dbReference>
<dbReference type="FunFam" id="3.40.50.720:FF:000045">
    <property type="entry name" value="1-deoxy-D-xylulose 5-phosphate reductoisomerase"/>
    <property type="match status" value="1"/>
</dbReference>
<dbReference type="Gene3D" id="1.10.1740.10">
    <property type="match status" value="1"/>
</dbReference>
<dbReference type="Gene3D" id="3.40.50.720">
    <property type="entry name" value="NAD(P)-binding Rossmann-like Domain"/>
    <property type="match status" value="1"/>
</dbReference>
<dbReference type="HAMAP" id="MF_00183">
    <property type="entry name" value="DXP_reductoisom"/>
    <property type="match status" value="1"/>
</dbReference>
<dbReference type="InterPro" id="IPR003821">
    <property type="entry name" value="DXP_reductoisomerase"/>
</dbReference>
<dbReference type="InterPro" id="IPR013644">
    <property type="entry name" value="DXP_reductoisomerase_C"/>
</dbReference>
<dbReference type="InterPro" id="IPR013512">
    <property type="entry name" value="DXP_reductoisomerase_N"/>
</dbReference>
<dbReference type="InterPro" id="IPR026877">
    <property type="entry name" value="DXPR_C"/>
</dbReference>
<dbReference type="InterPro" id="IPR036169">
    <property type="entry name" value="DXPR_C_sf"/>
</dbReference>
<dbReference type="InterPro" id="IPR036291">
    <property type="entry name" value="NAD(P)-bd_dom_sf"/>
</dbReference>
<dbReference type="NCBIfam" id="TIGR00243">
    <property type="entry name" value="Dxr"/>
    <property type="match status" value="1"/>
</dbReference>
<dbReference type="NCBIfam" id="NF003938">
    <property type="entry name" value="PRK05447.1-1"/>
    <property type="match status" value="1"/>
</dbReference>
<dbReference type="NCBIfam" id="NF009114">
    <property type="entry name" value="PRK12464.1"/>
    <property type="match status" value="1"/>
</dbReference>
<dbReference type="PANTHER" id="PTHR30525">
    <property type="entry name" value="1-DEOXY-D-XYLULOSE 5-PHOSPHATE REDUCTOISOMERASE"/>
    <property type="match status" value="1"/>
</dbReference>
<dbReference type="PANTHER" id="PTHR30525:SF0">
    <property type="entry name" value="1-DEOXY-D-XYLULOSE 5-PHOSPHATE REDUCTOISOMERASE, CHLOROPLASTIC"/>
    <property type="match status" value="1"/>
</dbReference>
<dbReference type="Pfam" id="PF08436">
    <property type="entry name" value="DXP_redisom_C"/>
    <property type="match status" value="1"/>
</dbReference>
<dbReference type="Pfam" id="PF02670">
    <property type="entry name" value="DXP_reductoisom"/>
    <property type="match status" value="1"/>
</dbReference>
<dbReference type="Pfam" id="PF13288">
    <property type="entry name" value="DXPR_C"/>
    <property type="match status" value="1"/>
</dbReference>
<dbReference type="PIRSF" id="PIRSF006205">
    <property type="entry name" value="Dxp_reductismrs"/>
    <property type="match status" value="1"/>
</dbReference>
<dbReference type="SUPFAM" id="SSF69055">
    <property type="entry name" value="1-deoxy-D-xylulose-5-phosphate reductoisomerase, C-terminal domain"/>
    <property type="match status" value="1"/>
</dbReference>
<dbReference type="SUPFAM" id="SSF55347">
    <property type="entry name" value="Glyceraldehyde-3-phosphate dehydrogenase-like, C-terminal domain"/>
    <property type="match status" value="1"/>
</dbReference>
<dbReference type="SUPFAM" id="SSF51735">
    <property type="entry name" value="NAD(P)-binding Rossmann-fold domains"/>
    <property type="match status" value="1"/>
</dbReference>
<name>DXR_ACTP2</name>